<sequence>MLNISHYKIIAIGKIKKKWIQEGIEMYLKRLPGLEVKEIKDSTQLKEEHTIKEIISKNEFLVTLNENGQSFTSKQLATKLLNSHNQNITFVIGGASGLSSSLNNLASWQLSLSPLTFPHEIARLLLIEQLYRAKAITQGGPYHKE</sequence>
<reference key="1">
    <citation type="journal article" date="2007" name="PLoS Genet.">
        <title>Patterns and implications of gene gain and loss in the evolution of Prochlorococcus.</title>
        <authorList>
            <person name="Kettler G.C."/>
            <person name="Martiny A.C."/>
            <person name="Huang K."/>
            <person name="Zucker J."/>
            <person name="Coleman M.L."/>
            <person name="Rodrigue S."/>
            <person name="Chen F."/>
            <person name="Lapidus A."/>
            <person name="Ferriera S."/>
            <person name="Johnson J."/>
            <person name="Steglich C."/>
            <person name="Church G.M."/>
            <person name="Richardson P."/>
            <person name="Chisholm S.W."/>
        </authorList>
    </citation>
    <scope>NUCLEOTIDE SEQUENCE [LARGE SCALE GENOMIC DNA]</scope>
    <source>
        <strain>NATL2A</strain>
    </source>
</reference>
<name>RLMH_PROMT</name>
<comment type="function">
    <text evidence="1">Specifically methylates the pseudouridine at position 1915 (m3Psi1915) in 23S rRNA.</text>
</comment>
<comment type="catalytic activity">
    <reaction evidence="1">
        <text>pseudouridine(1915) in 23S rRNA + S-adenosyl-L-methionine = N(3)-methylpseudouridine(1915) in 23S rRNA + S-adenosyl-L-homocysteine + H(+)</text>
        <dbReference type="Rhea" id="RHEA:42752"/>
        <dbReference type="Rhea" id="RHEA-COMP:10221"/>
        <dbReference type="Rhea" id="RHEA-COMP:10222"/>
        <dbReference type="ChEBI" id="CHEBI:15378"/>
        <dbReference type="ChEBI" id="CHEBI:57856"/>
        <dbReference type="ChEBI" id="CHEBI:59789"/>
        <dbReference type="ChEBI" id="CHEBI:65314"/>
        <dbReference type="ChEBI" id="CHEBI:74486"/>
        <dbReference type="EC" id="2.1.1.177"/>
    </reaction>
</comment>
<comment type="subunit">
    <text evidence="1">Homodimer.</text>
</comment>
<comment type="subcellular location">
    <subcellularLocation>
        <location evidence="1">Cytoplasm</location>
    </subcellularLocation>
</comment>
<comment type="similarity">
    <text evidence="1">Belongs to the RNA methyltransferase RlmH family.</text>
</comment>
<comment type="sequence caution" evidence="2">
    <conflict type="erroneous initiation">
        <sequence resource="EMBL-CDS" id="AAZ57768"/>
    </conflict>
</comment>
<accession>Q46L60</accession>
<feature type="chain" id="PRO_0000260583" description="Ribosomal RNA large subunit methyltransferase H">
    <location>
        <begin position="1"/>
        <end position="145"/>
    </location>
</feature>
<feature type="binding site" evidence="1">
    <location>
        <position position="64"/>
    </location>
    <ligand>
        <name>S-adenosyl-L-methionine</name>
        <dbReference type="ChEBI" id="CHEBI:59789"/>
    </ligand>
</feature>
<feature type="binding site" evidence="1">
    <location>
        <position position="93"/>
    </location>
    <ligand>
        <name>S-adenosyl-L-methionine</name>
        <dbReference type="ChEBI" id="CHEBI:59789"/>
    </ligand>
</feature>
<feature type="binding site" evidence="1">
    <location>
        <begin position="112"/>
        <end position="117"/>
    </location>
    <ligand>
        <name>S-adenosyl-L-methionine</name>
        <dbReference type="ChEBI" id="CHEBI:59789"/>
    </ligand>
</feature>
<proteinExistence type="inferred from homology"/>
<dbReference type="EC" id="2.1.1.177" evidence="1"/>
<dbReference type="EMBL" id="CP000095">
    <property type="protein sequence ID" value="AAZ57768.1"/>
    <property type="status" value="ALT_INIT"/>
    <property type="molecule type" value="Genomic_DNA"/>
</dbReference>
<dbReference type="RefSeq" id="WP_041711182.1">
    <property type="nucleotide sequence ID" value="NC_007335.2"/>
</dbReference>
<dbReference type="SMR" id="Q46L60"/>
<dbReference type="STRING" id="59920.PMN2A_0276"/>
<dbReference type="KEGG" id="pmn:PMN2A_0276"/>
<dbReference type="HOGENOM" id="CLU_100552_0_0_3"/>
<dbReference type="OrthoDB" id="9806643at2"/>
<dbReference type="PhylomeDB" id="Q46L60"/>
<dbReference type="Proteomes" id="UP000002535">
    <property type="component" value="Chromosome"/>
</dbReference>
<dbReference type="GO" id="GO:0005737">
    <property type="term" value="C:cytoplasm"/>
    <property type="evidence" value="ECO:0007669"/>
    <property type="project" value="UniProtKB-SubCell"/>
</dbReference>
<dbReference type="GO" id="GO:0070038">
    <property type="term" value="F:rRNA (pseudouridine-N3-)-methyltransferase activity"/>
    <property type="evidence" value="ECO:0007669"/>
    <property type="project" value="UniProtKB-UniRule"/>
</dbReference>
<dbReference type="CDD" id="cd18081">
    <property type="entry name" value="RlmH-like"/>
    <property type="match status" value="1"/>
</dbReference>
<dbReference type="Gene3D" id="3.40.1280.10">
    <property type="match status" value="1"/>
</dbReference>
<dbReference type="HAMAP" id="MF_00658">
    <property type="entry name" value="23SrRNA_methyltr_H"/>
    <property type="match status" value="1"/>
</dbReference>
<dbReference type="InterPro" id="IPR029028">
    <property type="entry name" value="Alpha/beta_knot_MTases"/>
</dbReference>
<dbReference type="InterPro" id="IPR003742">
    <property type="entry name" value="RlmH-like"/>
</dbReference>
<dbReference type="InterPro" id="IPR029026">
    <property type="entry name" value="tRNA_m1G_MTases_N"/>
</dbReference>
<dbReference type="PANTHER" id="PTHR33603">
    <property type="entry name" value="METHYLTRANSFERASE"/>
    <property type="match status" value="1"/>
</dbReference>
<dbReference type="PANTHER" id="PTHR33603:SF1">
    <property type="entry name" value="RIBOSOMAL RNA LARGE SUBUNIT METHYLTRANSFERASE H"/>
    <property type="match status" value="1"/>
</dbReference>
<dbReference type="Pfam" id="PF02590">
    <property type="entry name" value="SPOUT_MTase"/>
    <property type="match status" value="1"/>
</dbReference>
<dbReference type="PIRSF" id="PIRSF004505">
    <property type="entry name" value="MT_bac"/>
    <property type="match status" value="1"/>
</dbReference>
<dbReference type="SUPFAM" id="SSF75217">
    <property type="entry name" value="alpha/beta knot"/>
    <property type="match status" value="1"/>
</dbReference>
<keyword id="KW-0963">Cytoplasm</keyword>
<keyword id="KW-0489">Methyltransferase</keyword>
<keyword id="KW-1185">Reference proteome</keyword>
<keyword id="KW-0698">rRNA processing</keyword>
<keyword id="KW-0949">S-adenosyl-L-methionine</keyword>
<keyword id="KW-0808">Transferase</keyword>
<gene>
    <name evidence="1" type="primary">rlmH</name>
    <name type="ordered locus">PMN2A_0276</name>
</gene>
<protein>
    <recommendedName>
        <fullName evidence="1">Ribosomal RNA large subunit methyltransferase H</fullName>
        <ecNumber evidence="1">2.1.1.177</ecNumber>
    </recommendedName>
    <alternativeName>
        <fullName evidence="1">23S rRNA (pseudouridine1915-N3)-methyltransferase</fullName>
    </alternativeName>
    <alternativeName>
        <fullName evidence="1">23S rRNA m3Psi1915 methyltransferase</fullName>
    </alternativeName>
    <alternativeName>
        <fullName evidence="1">rRNA (pseudouridine-N3-)-methyltransferase RlmH</fullName>
    </alternativeName>
</protein>
<organism>
    <name type="scientific">Prochlorococcus marinus (strain NATL2A)</name>
    <dbReference type="NCBI Taxonomy" id="59920"/>
    <lineage>
        <taxon>Bacteria</taxon>
        <taxon>Bacillati</taxon>
        <taxon>Cyanobacteriota</taxon>
        <taxon>Cyanophyceae</taxon>
        <taxon>Synechococcales</taxon>
        <taxon>Prochlorococcaceae</taxon>
        <taxon>Prochlorococcus</taxon>
    </lineage>
</organism>
<evidence type="ECO:0000255" key="1">
    <source>
        <dbReference type="HAMAP-Rule" id="MF_00658"/>
    </source>
</evidence>
<evidence type="ECO:0000305" key="2"/>